<reference key="1">
    <citation type="journal article" date="2008" name="Cell. Mol. Life Sci.">
        <title>Molecular diversity and evolution of cystine knot toxins of the tarantula Chilobrachys jingzhao.</title>
        <authorList>
            <person name="Chen J."/>
            <person name="Deng M."/>
            <person name="He Q."/>
            <person name="Meng E."/>
            <person name="Jiang L."/>
            <person name="Liao Z."/>
            <person name="Rong M."/>
            <person name="Liang S."/>
        </authorList>
    </citation>
    <scope>NUCLEOTIDE SEQUENCE [LARGE SCALE MRNA]</scope>
    <source>
        <tissue>Venom gland</tissue>
    </source>
</reference>
<accession>B1P1D3</accession>
<organism>
    <name type="scientific">Chilobrachys guangxiensis</name>
    <name type="common">Chinese earth tiger tarantula</name>
    <name type="synonym">Chilobrachys jingzhao</name>
    <dbReference type="NCBI Taxonomy" id="278060"/>
    <lineage>
        <taxon>Eukaryota</taxon>
        <taxon>Metazoa</taxon>
        <taxon>Ecdysozoa</taxon>
        <taxon>Arthropoda</taxon>
        <taxon>Chelicerata</taxon>
        <taxon>Arachnida</taxon>
        <taxon>Araneae</taxon>
        <taxon>Mygalomorphae</taxon>
        <taxon>Theraphosidae</taxon>
        <taxon>Chilobrachys</taxon>
    </lineage>
</organism>
<dbReference type="EMBL" id="EU233864">
    <property type="protein sequence ID" value="ABY71683.1"/>
    <property type="molecule type" value="mRNA"/>
</dbReference>
<dbReference type="SMR" id="B1P1D3"/>
<dbReference type="ArachnoServer" id="AS000812">
    <property type="toxin name" value="U11-theraphotoxin-Cg1b"/>
</dbReference>
<dbReference type="GO" id="GO:0005576">
    <property type="term" value="C:extracellular region"/>
    <property type="evidence" value="ECO:0007669"/>
    <property type="project" value="UniProtKB-SubCell"/>
</dbReference>
<dbReference type="GO" id="GO:0008200">
    <property type="term" value="F:ion channel inhibitor activity"/>
    <property type="evidence" value="ECO:0007669"/>
    <property type="project" value="InterPro"/>
</dbReference>
<dbReference type="GO" id="GO:0090729">
    <property type="term" value="F:toxin activity"/>
    <property type="evidence" value="ECO:0007669"/>
    <property type="project" value="UniProtKB-KW"/>
</dbReference>
<dbReference type="InterPro" id="IPR011696">
    <property type="entry name" value="Huwentoxin-1"/>
</dbReference>
<dbReference type="InterPro" id="IPR013140">
    <property type="entry name" value="Huwentoxin_CS1"/>
</dbReference>
<dbReference type="Pfam" id="PF07740">
    <property type="entry name" value="Toxin_12"/>
    <property type="match status" value="1"/>
</dbReference>
<dbReference type="SUPFAM" id="SSF57059">
    <property type="entry name" value="omega toxin-like"/>
    <property type="match status" value="1"/>
</dbReference>
<dbReference type="PROSITE" id="PS60021">
    <property type="entry name" value="HWTX_1"/>
    <property type="match status" value="1"/>
</dbReference>
<evidence type="ECO:0000250" key="1"/>
<evidence type="ECO:0000255" key="2"/>
<evidence type="ECO:0000305" key="3"/>
<evidence type="ECO:0000312" key="4">
    <source>
        <dbReference type="EMBL" id="ABY71683.1"/>
    </source>
</evidence>
<protein>
    <recommendedName>
        <fullName>U11-theraphotoxin-Cg1b</fullName>
        <shortName>U11-TRTX-Cg1b</shortName>
    </recommendedName>
    <alternativeName>
        <fullName evidence="4">Jingzhaotoxin-18</fullName>
        <shortName evidence="4">JZTX-18</shortName>
    </alternativeName>
</protein>
<keyword id="KW-1015">Disulfide bond</keyword>
<keyword id="KW-0872">Ion channel impairing toxin</keyword>
<keyword id="KW-0960">Knottin</keyword>
<keyword id="KW-0964">Secreted</keyword>
<keyword id="KW-0732">Signal</keyword>
<keyword id="KW-0800">Toxin</keyword>
<name>JZT18_CHIGU</name>
<proteinExistence type="evidence at transcript level"/>
<comment type="function">
    <text>Probable ion channel inhibitor.</text>
</comment>
<comment type="subcellular location">
    <subcellularLocation>
        <location evidence="1">Secreted</location>
    </subcellularLocation>
</comment>
<comment type="tissue specificity">
    <text>Expressed by the venom gland.</text>
</comment>
<comment type="domain">
    <text evidence="1">The presence of a 'disulfide through disulfide knot' structurally defines this protein as a knottin.</text>
</comment>
<comment type="similarity">
    <text evidence="3">Belongs to the neurotoxin 10 (Hwtx-1) family. 32 (Jztx-16) subfamily.</text>
</comment>
<feature type="signal peptide" evidence="2">
    <location>
        <begin position="1"/>
        <end position="21"/>
    </location>
</feature>
<feature type="propeptide" id="PRO_0000398433" evidence="1">
    <location>
        <begin position="22"/>
        <end position="29"/>
    </location>
</feature>
<feature type="peptide" id="PRO_0000398434" description="U11-theraphotoxin-Cg1b">
    <location>
        <begin position="30"/>
        <end position="65"/>
    </location>
</feature>
<feature type="disulfide bond" evidence="1">
    <location>
        <begin position="31"/>
        <end position="45"/>
    </location>
</feature>
<feature type="disulfide bond" evidence="1">
    <location>
        <begin position="38"/>
        <end position="50"/>
    </location>
</feature>
<feature type="disulfide bond" evidence="1">
    <location>
        <begin position="44"/>
        <end position="57"/>
    </location>
</feature>
<sequence>MKTTILVVILGLTLLFALSAATELKDEERDCKGFQVKCKKDSECCSSYVCGRQWKWCVYPSPFGR</sequence>